<dbReference type="EMBL" id="EF380353">
    <property type="protein sequence ID" value="ABR01457.1"/>
    <property type="molecule type" value="Genomic_DNA"/>
</dbReference>
<dbReference type="RefSeq" id="YP_001294380.1">
    <property type="nucleotide sequence ID" value="NC_009601.1"/>
</dbReference>
<dbReference type="SMR" id="A6MMN5"/>
<dbReference type="GeneID" id="5236659"/>
<dbReference type="GO" id="GO:0009535">
    <property type="term" value="C:chloroplast thylakoid membrane"/>
    <property type="evidence" value="ECO:0007669"/>
    <property type="project" value="UniProtKB-SubCell"/>
</dbReference>
<dbReference type="GO" id="GO:0015979">
    <property type="term" value="P:photosynthesis"/>
    <property type="evidence" value="ECO:0007669"/>
    <property type="project" value="InterPro"/>
</dbReference>
<dbReference type="HAMAP" id="MF_00293">
    <property type="entry name" value="PSII_PsbN"/>
    <property type="match status" value="1"/>
</dbReference>
<dbReference type="InterPro" id="IPR003398">
    <property type="entry name" value="PSII_PsbN"/>
</dbReference>
<dbReference type="PANTHER" id="PTHR35326">
    <property type="entry name" value="PROTEIN PSBN"/>
    <property type="match status" value="1"/>
</dbReference>
<dbReference type="PANTHER" id="PTHR35326:SF3">
    <property type="entry name" value="PROTEIN PSBN"/>
    <property type="match status" value="1"/>
</dbReference>
<dbReference type="Pfam" id="PF02468">
    <property type="entry name" value="PsbN"/>
    <property type="match status" value="1"/>
</dbReference>
<name>PSBN_DIOEL</name>
<feature type="chain" id="PRO_0000362191" description="Protein PsbN">
    <location>
        <begin position="1"/>
        <end position="43"/>
    </location>
</feature>
<feature type="transmembrane region" description="Helical" evidence="1">
    <location>
        <begin position="7"/>
        <end position="27"/>
    </location>
</feature>
<proteinExistence type="inferred from homology"/>
<comment type="function">
    <text evidence="1">May play a role in photosystem I and II biogenesis.</text>
</comment>
<comment type="subcellular location">
    <subcellularLocation>
        <location evidence="1">Plastid</location>
        <location evidence="1">Chloroplast thylakoid membrane</location>
        <topology evidence="1">Single-pass membrane protein</topology>
    </subcellularLocation>
</comment>
<comment type="similarity">
    <text evidence="1">Belongs to the PsbN family.</text>
</comment>
<comment type="caution">
    <text evidence="1">Originally thought to be a component of PSII; based on experiments in Synechocystis, N.tabacum and barley, and its absence from PSII in T.elongatus and T.vulcanus, this is probably not true.</text>
</comment>
<protein>
    <recommendedName>
        <fullName evidence="1">Protein PsbN</fullName>
    </recommendedName>
</protein>
<sequence>METATLVTIFISGLLVSFTGYALYIAFGQPSQQLRDPFEEHGD</sequence>
<organism>
    <name type="scientific">Dioscorea elephantipes</name>
    <name type="common">Elephant's foot yam</name>
    <name type="synonym">Testudinaria elephantipes</name>
    <dbReference type="NCBI Taxonomy" id="145284"/>
    <lineage>
        <taxon>Eukaryota</taxon>
        <taxon>Viridiplantae</taxon>
        <taxon>Streptophyta</taxon>
        <taxon>Embryophyta</taxon>
        <taxon>Tracheophyta</taxon>
        <taxon>Spermatophyta</taxon>
        <taxon>Magnoliopsida</taxon>
        <taxon>Liliopsida</taxon>
        <taxon>Dioscoreales</taxon>
        <taxon>Dioscoreaceae</taxon>
        <taxon>Dioscorea</taxon>
    </lineage>
</organism>
<gene>
    <name evidence="1" type="primary">psbN</name>
</gene>
<geneLocation type="chloroplast"/>
<evidence type="ECO:0000255" key="1">
    <source>
        <dbReference type="HAMAP-Rule" id="MF_00293"/>
    </source>
</evidence>
<reference key="1">
    <citation type="journal article" date="2007" name="Mol. Phylogenet. Evol.">
        <title>Phylogenetic and evolutionary implications of complete chloroplast genome sequences of four early-diverging angiosperms: Buxus (Buxaceae), Chloranthus (Chloranthaceae), Dioscorea (Dioscoreaceae), and Illicium (Schisandraceae).</title>
        <authorList>
            <person name="Hansen D.R."/>
            <person name="Dastidar S.G."/>
            <person name="Cai Z."/>
            <person name="Penaflor C."/>
            <person name="Kuehl J.V."/>
            <person name="Boore J.L."/>
            <person name="Jansen R.K."/>
        </authorList>
    </citation>
    <scope>NUCLEOTIDE SEQUENCE [LARGE SCALE GENOMIC DNA]</scope>
</reference>
<keyword id="KW-0150">Chloroplast</keyword>
<keyword id="KW-0472">Membrane</keyword>
<keyword id="KW-0934">Plastid</keyword>
<keyword id="KW-0793">Thylakoid</keyword>
<keyword id="KW-0812">Transmembrane</keyword>
<keyword id="KW-1133">Transmembrane helix</keyword>
<accession>A6MMN5</accession>